<keyword id="KW-0119">Carbohydrate metabolism</keyword>
<keyword id="KW-0963">Cytoplasm</keyword>
<keyword id="KW-0456">Lyase</keyword>
<keyword id="KW-0597">Phosphoprotein</keyword>
<keyword id="KW-1185">Reference proteome</keyword>
<keyword id="KW-0704">Schiff base</keyword>
<organism>
    <name type="scientific">Mus musculus</name>
    <name type="common">Mouse</name>
    <dbReference type="NCBI Taxonomy" id="10090"/>
    <lineage>
        <taxon>Eukaryota</taxon>
        <taxon>Metazoa</taxon>
        <taxon>Chordata</taxon>
        <taxon>Craniata</taxon>
        <taxon>Vertebrata</taxon>
        <taxon>Euteleostomi</taxon>
        <taxon>Mammalia</taxon>
        <taxon>Eutheria</taxon>
        <taxon>Euarchontoglires</taxon>
        <taxon>Glires</taxon>
        <taxon>Rodentia</taxon>
        <taxon>Myomorpha</taxon>
        <taxon>Muroidea</taxon>
        <taxon>Muridae</taxon>
        <taxon>Murinae</taxon>
        <taxon>Mus</taxon>
        <taxon>Mus</taxon>
    </lineage>
</organism>
<name>NPL_MOUSE</name>
<proteinExistence type="evidence at protein level"/>
<sequence length="320" mass="35130">MAFPKKKLRGLVAATITPMTENGEINFPVIGQYVDYLVKEQGVKNIFVNGTTGEGLSLSVSERRQVAEEWVNQGRNKLDQVVIHVGALNVKESQELAQHAAEIGADGIAVIAPFFFKSQNKDALISFLREVAAAAPTLPFYYYHMPSMTGVKIRAEELLDGIQDKIPTFQGLKFTDTDLLDFGQCVDQNHQRQFALLFGVDEQLLSALVMGATGAVGSTYNYLGKKTNQMLEAFEQKDLASALSYQFRIQRFINYVIKLGFGVSQTKAIMTLVSGIPMGPPRLPLQKATQEFTAKAEAKLKSLDFLSSPSVKEGKPLASA</sequence>
<evidence type="ECO:0000250" key="1"/>
<evidence type="ECO:0000250" key="2">
    <source>
        <dbReference type="UniProtKB" id="P0A6L4"/>
    </source>
</evidence>
<evidence type="ECO:0000250" key="3">
    <source>
        <dbReference type="UniProtKB" id="Q9BXD5"/>
    </source>
</evidence>
<evidence type="ECO:0000269" key="4">
    <source>
    </source>
</evidence>
<evidence type="ECO:0000305" key="5"/>
<evidence type="ECO:0000312" key="6">
    <source>
        <dbReference type="MGI" id="MGI:1921341"/>
    </source>
</evidence>
<evidence type="ECO:0007744" key="7">
    <source>
    </source>
</evidence>
<protein>
    <recommendedName>
        <fullName evidence="5">N-acetylneuraminate lyase</fullName>
        <shortName>NALase</shortName>
        <ecNumber evidence="4">4.1.3.3</ecNumber>
    </recommendedName>
    <alternativeName>
        <fullName>N-acetylneuraminate pyruvate-lyase</fullName>
    </alternativeName>
    <alternativeName>
        <fullName>N-acetylneuraminic acid aldolase</fullName>
    </alternativeName>
    <alternativeName>
        <fullName>Sialate lyase</fullName>
    </alternativeName>
    <alternativeName>
        <fullName>Sialate-pyruvate lyase</fullName>
    </alternativeName>
    <alternativeName>
        <fullName>Sialic acid aldolase</fullName>
    </alternativeName>
    <alternativeName>
        <fullName>Sialic acid lyase</fullName>
    </alternativeName>
</protein>
<reference key="1">
    <citation type="journal article" date="2005" name="Science">
        <title>The transcriptional landscape of the mammalian genome.</title>
        <authorList>
            <person name="Carninci P."/>
            <person name="Kasukawa T."/>
            <person name="Katayama S."/>
            <person name="Gough J."/>
            <person name="Frith M.C."/>
            <person name="Maeda N."/>
            <person name="Oyama R."/>
            <person name="Ravasi T."/>
            <person name="Lenhard B."/>
            <person name="Wells C."/>
            <person name="Kodzius R."/>
            <person name="Shimokawa K."/>
            <person name="Bajic V.B."/>
            <person name="Brenner S.E."/>
            <person name="Batalov S."/>
            <person name="Forrest A.R."/>
            <person name="Zavolan M."/>
            <person name="Davis M.J."/>
            <person name="Wilming L.G."/>
            <person name="Aidinis V."/>
            <person name="Allen J.E."/>
            <person name="Ambesi-Impiombato A."/>
            <person name="Apweiler R."/>
            <person name="Aturaliya R.N."/>
            <person name="Bailey T.L."/>
            <person name="Bansal M."/>
            <person name="Baxter L."/>
            <person name="Beisel K.W."/>
            <person name="Bersano T."/>
            <person name="Bono H."/>
            <person name="Chalk A.M."/>
            <person name="Chiu K.P."/>
            <person name="Choudhary V."/>
            <person name="Christoffels A."/>
            <person name="Clutterbuck D.R."/>
            <person name="Crowe M.L."/>
            <person name="Dalla E."/>
            <person name="Dalrymple B.P."/>
            <person name="de Bono B."/>
            <person name="Della Gatta G."/>
            <person name="di Bernardo D."/>
            <person name="Down T."/>
            <person name="Engstrom P."/>
            <person name="Fagiolini M."/>
            <person name="Faulkner G."/>
            <person name="Fletcher C.F."/>
            <person name="Fukushima T."/>
            <person name="Furuno M."/>
            <person name="Futaki S."/>
            <person name="Gariboldi M."/>
            <person name="Georgii-Hemming P."/>
            <person name="Gingeras T.R."/>
            <person name="Gojobori T."/>
            <person name="Green R.E."/>
            <person name="Gustincich S."/>
            <person name="Harbers M."/>
            <person name="Hayashi Y."/>
            <person name="Hensch T.K."/>
            <person name="Hirokawa N."/>
            <person name="Hill D."/>
            <person name="Huminiecki L."/>
            <person name="Iacono M."/>
            <person name="Ikeo K."/>
            <person name="Iwama A."/>
            <person name="Ishikawa T."/>
            <person name="Jakt M."/>
            <person name="Kanapin A."/>
            <person name="Katoh M."/>
            <person name="Kawasawa Y."/>
            <person name="Kelso J."/>
            <person name="Kitamura H."/>
            <person name="Kitano H."/>
            <person name="Kollias G."/>
            <person name="Krishnan S.P."/>
            <person name="Kruger A."/>
            <person name="Kummerfeld S.K."/>
            <person name="Kurochkin I.V."/>
            <person name="Lareau L.F."/>
            <person name="Lazarevic D."/>
            <person name="Lipovich L."/>
            <person name="Liu J."/>
            <person name="Liuni S."/>
            <person name="McWilliam S."/>
            <person name="Madan Babu M."/>
            <person name="Madera M."/>
            <person name="Marchionni L."/>
            <person name="Matsuda H."/>
            <person name="Matsuzawa S."/>
            <person name="Miki H."/>
            <person name="Mignone F."/>
            <person name="Miyake S."/>
            <person name="Morris K."/>
            <person name="Mottagui-Tabar S."/>
            <person name="Mulder N."/>
            <person name="Nakano N."/>
            <person name="Nakauchi H."/>
            <person name="Ng P."/>
            <person name="Nilsson R."/>
            <person name="Nishiguchi S."/>
            <person name="Nishikawa S."/>
            <person name="Nori F."/>
            <person name="Ohara O."/>
            <person name="Okazaki Y."/>
            <person name="Orlando V."/>
            <person name="Pang K.C."/>
            <person name="Pavan W.J."/>
            <person name="Pavesi G."/>
            <person name="Pesole G."/>
            <person name="Petrovsky N."/>
            <person name="Piazza S."/>
            <person name="Reed J."/>
            <person name="Reid J.F."/>
            <person name="Ring B.Z."/>
            <person name="Ringwald M."/>
            <person name="Rost B."/>
            <person name="Ruan Y."/>
            <person name="Salzberg S.L."/>
            <person name="Sandelin A."/>
            <person name="Schneider C."/>
            <person name="Schoenbach C."/>
            <person name="Sekiguchi K."/>
            <person name="Semple C.A."/>
            <person name="Seno S."/>
            <person name="Sessa L."/>
            <person name="Sheng Y."/>
            <person name="Shibata Y."/>
            <person name="Shimada H."/>
            <person name="Shimada K."/>
            <person name="Silva D."/>
            <person name="Sinclair B."/>
            <person name="Sperling S."/>
            <person name="Stupka E."/>
            <person name="Sugiura K."/>
            <person name="Sultana R."/>
            <person name="Takenaka Y."/>
            <person name="Taki K."/>
            <person name="Tammoja K."/>
            <person name="Tan S.L."/>
            <person name="Tang S."/>
            <person name="Taylor M.S."/>
            <person name="Tegner J."/>
            <person name="Teichmann S.A."/>
            <person name="Ueda H.R."/>
            <person name="van Nimwegen E."/>
            <person name="Verardo R."/>
            <person name="Wei C.L."/>
            <person name="Yagi K."/>
            <person name="Yamanishi H."/>
            <person name="Zabarovsky E."/>
            <person name="Zhu S."/>
            <person name="Zimmer A."/>
            <person name="Hide W."/>
            <person name="Bult C."/>
            <person name="Grimmond S.M."/>
            <person name="Teasdale R.D."/>
            <person name="Liu E.T."/>
            <person name="Brusic V."/>
            <person name="Quackenbush J."/>
            <person name="Wahlestedt C."/>
            <person name="Mattick J.S."/>
            <person name="Hume D.A."/>
            <person name="Kai C."/>
            <person name="Sasaki D."/>
            <person name="Tomaru Y."/>
            <person name="Fukuda S."/>
            <person name="Kanamori-Katayama M."/>
            <person name="Suzuki M."/>
            <person name="Aoki J."/>
            <person name="Arakawa T."/>
            <person name="Iida J."/>
            <person name="Imamura K."/>
            <person name="Itoh M."/>
            <person name="Kato T."/>
            <person name="Kawaji H."/>
            <person name="Kawagashira N."/>
            <person name="Kawashima T."/>
            <person name="Kojima M."/>
            <person name="Kondo S."/>
            <person name="Konno H."/>
            <person name="Nakano K."/>
            <person name="Ninomiya N."/>
            <person name="Nishio T."/>
            <person name="Okada M."/>
            <person name="Plessy C."/>
            <person name="Shibata K."/>
            <person name="Shiraki T."/>
            <person name="Suzuki S."/>
            <person name="Tagami M."/>
            <person name="Waki K."/>
            <person name="Watahiki A."/>
            <person name="Okamura-Oho Y."/>
            <person name="Suzuki H."/>
            <person name="Kawai J."/>
            <person name="Hayashizaki Y."/>
        </authorList>
    </citation>
    <scope>NUCLEOTIDE SEQUENCE [LARGE SCALE MRNA]</scope>
    <source>
        <strain>C57BL/6J</strain>
        <strain>NOD</strain>
        <tissue>Kidney</tissue>
        <tissue>Thymus</tissue>
    </source>
</reference>
<reference key="2">
    <citation type="journal article" date="2004" name="Genome Res.">
        <title>The status, quality, and expansion of the NIH full-length cDNA project: the Mammalian Gene Collection (MGC).</title>
        <authorList>
            <consortium name="The MGC Project Team"/>
        </authorList>
    </citation>
    <scope>NUCLEOTIDE SEQUENCE [LARGE SCALE MRNA]</scope>
    <source>
        <tissue>Eye</tissue>
    </source>
</reference>
<reference key="3">
    <citation type="journal article" date="2010" name="Cell">
        <title>A tissue-specific atlas of mouse protein phosphorylation and expression.</title>
        <authorList>
            <person name="Huttlin E.L."/>
            <person name="Jedrychowski M.P."/>
            <person name="Elias J.E."/>
            <person name="Goswami T."/>
            <person name="Rad R."/>
            <person name="Beausoleil S.A."/>
            <person name="Villen J."/>
            <person name="Haas W."/>
            <person name="Sowa M.E."/>
            <person name="Gygi S.P."/>
        </authorList>
    </citation>
    <scope>PHOSPHORYLATION [LARGE SCALE ANALYSIS] AT SER-308</scope>
    <scope>IDENTIFICATION BY MASS SPECTROMETRY [LARGE SCALE ANALYSIS]</scope>
    <source>
        <tissue>Brain</tissue>
        <tissue>Brown adipose tissue</tissue>
        <tissue>Heart</tissue>
        <tissue>Kidney</tissue>
        <tissue>Liver</tissue>
        <tissue>Lung</tissue>
        <tissue>Pancreas</tissue>
        <tissue>Spleen</tissue>
        <tissue>Testis</tissue>
    </source>
</reference>
<reference key="4">
    <citation type="journal article" date="2012" name="J. Biol. Chem.">
        <title>Metabolism of vertebrate amino sugars with N-glycolyl groups: elucidating the intracellular fate of the non-human sialic acid N-glycolylneuraminic acid.</title>
        <authorList>
            <person name="Bergfeld A.K."/>
            <person name="Pearce O.M."/>
            <person name="Diaz S.L."/>
            <person name="Pham T."/>
            <person name="Varki A."/>
        </authorList>
    </citation>
    <scope>FUNCTION</scope>
    <scope>CATALYTIC ACTIVITY</scope>
    <scope>PATHWAY</scope>
</reference>
<comment type="function">
    <text evidence="4">Catalyzes the cleavage of N-acetylneuraminic acid (sialic acid) to form pyruvate and N-acetylmannosamine via a Schiff base intermediate. It prevents sialic acids from being recycled and returning to the cell surface. Involved in the N-glycolylneuraminic acid (Neu5Gc) degradation pathway.</text>
</comment>
<comment type="catalytic activity">
    <reaction evidence="4">
        <text>aceneuramate = aldehydo-N-acetyl-D-mannosamine + pyruvate</text>
        <dbReference type="Rhea" id="RHEA:23296"/>
        <dbReference type="ChEBI" id="CHEBI:15361"/>
        <dbReference type="ChEBI" id="CHEBI:17122"/>
        <dbReference type="ChEBI" id="CHEBI:173083"/>
        <dbReference type="EC" id="4.1.3.3"/>
    </reaction>
</comment>
<comment type="pathway">
    <text evidence="4">Amino-sugar metabolism; N-acetylneuraminate degradation.</text>
</comment>
<comment type="subunit">
    <text evidence="3">Homotetramer.</text>
</comment>
<comment type="subcellular location">
    <subcellularLocation>
        <location evidence="1">Cytoplasm</location>
    </subcellularLocation>
</comment>
<comment type="similarity">
    <text evidence="5">Belongs to the DapA family. NanA subfamily.</text>
</comment>
<gene>
    <name evidence="6" type="primary">Npl</name>
</gene>
<dbReference type="EC" id="4.1.3.3" evidence="4"/>
<dbReference type="EMBL" id="AK002734">
    <property type="protein sequence ID" value="BAB22314.1"/>
    <property type="molecule type" value="mRNA"/>
</dbReference>
<dbReference type="EMBL" id="AK088859">
    <property type="protein sequence ID" value="BAC40618.1"/>
    <property type="molecule type" value="mRNA"/>
</dbReference>
<dbReference type="EMBL" id="BC022734">
    <property type="protein sequence ID" value="AAH22734.1"/>
    <property type="molecule type" value="mRNA"/>
</dbReference>
<dbReference type="CCDS" id="CCDS15374.1"/>
<dbReference type="RefSeq" id="NP_083025.1">
    <property type="nucleotide sequence ID" value="NM_028749.1"/>
</dbReference>
<dbReference type="SMR" id="Q9DCJ9"/>
<dbReference type="BioGRID" id="216484">
    <property type="interactions" value="2"/>
</dbReference>
<dbReference type="FunCoup" id="Q9DCJ9">
    <property type="interactions" value="56"/>
</dbReference>
<dbReference type="STRING" id="10090.ENSMUSP00000037454"/>
<dbReference type="iPTMnet" id="Q9DCJ9"/>
<dbReference type="PhosphoSitePlus" id="Q9DCJ9"/>
<dbReference type="SwissPalm" id="Q9DCJ9"/>
<dbReference type="jPOST" id="Q9DCJ9"/>
<dbReference type="PaxDb" id="10090-ENSMUSP00000037454"/>
<dbReference type="PeptideAtlas" id="Q9DCJ9"/>
<dbReference type="ProteomicsDB" id="295513"/>
<dbReference type="Antibodypedia" id="34441">
    <property type="antibodies" value="125 antibodies from 21 providers"/>
</dbReference>
<dbReference type="DNASU" id="74091"/>
<dbReference type="Ensembl" id="ENSMUST00000041874.9">
    <property type="protein sequence ID" value="ENSMUSP00000037454.8"/>
    <property type="gene ID" value="ENSMUSG00000042684.9"/>
</dbReference>
<dbReference type="GeneID" id="74091"/>
<dbReference type="KEGG" id="mmu:74091"/>
<dbReference type="UCSC" id="uc007dac.1">
    <property type="organism name" value="mouse"/>
</dbReference>
<dbReference type="AGR" id="MGI:1921341"/>
<dbReference type="CTD" id="80896"/>
<dbReference type="MGI" id="MGI:1921341">
    <property type="gene designation" value="Npl"/>
</dbReference>
<dbReference type="VEuPathDB" id="HostDB:ENSMUSG00000042684"/>
<dbReference type="eggNOG" id="ENOG502QQA3">
    <property type="taxonomic scope" value="Eukaryota"/>
</dbReference>
<dbReference type="GeneTree" id="ENSGT00530000063604"/>
<dbReference type="HOGENOM" id="CLU_049343_6_1_1"/>
<dbReference type="InParanoid" id="Q9DCJ9"/>
<dbReference type="OMA" id="YWNAISA"/>
<dbReference type="OrthoDB" id="191315at2759"/>
<dbReference type="PhylomeDB" id="Q9DCJ9"/>
<dbReference type="TreeFam" id="TF353639"/>
<dbReference type="Reactome" id="R-MMU-4085001">
    <property type="pathway name" value="Sialic acid metabolism"/>
</dbReference>
<dbReference type="UniPathway" id="UPA00629"/>
<dbReference type="BioGRID-ORCS" id="74091">
    <property type="hits" value="2 hits in 76 CRISPR screens"/>
</dbReference>
<dbReference type="ChiTaRS" id="Npl">
    <property type="organism name" value="mouse"/>
</dbReference>
<dbReference type="PRO" id="PR:Q9DCJ9"/>
<dbReference type="Proteomes" id="UP000000589">
    <property type="component" value="Chromosome 1"/>
</dbReference>
<dbReference type="RNAct" id="Q9DCJ9">
    <property type="molecule type" value="protein"/>
</dbReference>
<dbReference type="Bgee" id="ENSMUSG00000042684">
    <property type="expression patterns" value="Expressed in stroma of bone marrow and 228 other cell types or tissues"/>
</dbReference>
<dbReference type="GO" id="GO:0005737">
    <property type="term" value="C:cytoplasm"/>
    <property type="evidence" value="ECO:0007669"/>
    <property type="project" value="UniProtKB-SubCell"/>
</dbReference>
<dbReference type="GO" id="GO:0042802">
    <property type="term" value="F:identical protein binding"/>
    <property type="evidence" value="ECO:0007669"/>
    <property type="project" value="Ensembl"/>
</dbReference>
<dbReference type="GO" id="GO:0008747">
    <property type="term" value="F:N-acetylneuraminate lyase activity"/>
    <property type="evidence" value="ECO:0000314"/>
    <property type="project" value="UniProtKB"/>
</dbReference>
<dbReference type="GO" id="GO:0019262">
    <property type="term" value="P:N-acetylneuraminate catabolic process"/>
    <property type="evidence" value="ECO:0000250"/>
    <property type="project" value="UniProtKB"/>
</dbReference>
<dbReference type="FunFam" id="3.20.20.70:FF:000133">
    <property type="entry name" value="N-acetylneuraminate pyruvate lyase"/>
    <property type="match status" value="1"/>
</dbReference>
<dbReference type="Gene3D" id="3.20.20.70">
    <property type="entry name" value="Aldolase class I"/>
    <property type="match status" value="1"/>
</dbReference>
<dbReference type="InterPro" id="IPR013785">
    <property type="entry name" value="Aldolase_TIM"/>
</dbReference>
<dbReference type="InterPro" id="IPR002220">
    <property type="entry name" value="DapA-like"/>
</dbReference>
<dbReference type="PANTHER" id="PTHR12128">
    <property type="entry name" value="DIHYDRODIPICOLINATE SYNTHASE"/>
    <property type="match status" value="1"/>
</dbReference>
<dbReference type="PANTHER" id="PTHR12128:SF21">
    <property type="entry name" value="N-ACETYLNEURAMINATE LYASE"/>
    <property type="match status" value="1"/>
</dbReference>
<dbReference type="Pfam" id="PF00701">
    <property type="entry name" value="DHDPS"/>
    <property type="match status" value="1"/>
</dbReference>
<dbReference type="PIRSF" id="PIRSF001365">
    <property type="entry name" value="DHDPS"/>
    <property type="match status" value="1"/>
</dbReference>
<dbReference type="PRINTS" id="PR00146">
    <property type="entry name" value="DHPICSNTHASE"/>
</dbReference>
<dbReference type="SMART" id="SM01130">
    <property type="entry name" value="DHDPS"/>
    <property type="match status" value="1"/>
</dbReference>
<dbReference type="SUPFAM" id="SSF51569">
    <property type="entry name" value="Aldolase"/>
    <property type="match status" value="1"/>
</dbReference>
<accession>Q9DCJ9</accession>
<feature type="chain" id="PRO_0000273353" description="N-acetylneuraminate lyase">
    <location>
        <begin position="1"/>
        <end position="320"/>
    </location>
</feature>
<feature type="active site" description="Proton donor" evidence="2">
    <location>
        <position position="143"/>
    </location>
</feature>
<feature type="active site" description="Schiff-base intermediate with substrate" evidence="2">
    <location>
        <position position="173"/>
    </location>
</feature>
<feature type="binding site" evidence="2">
    <location>
        <position position="51"/>
    </location>
    <ligand>
        <name>aceneuramate</name>
        <dbReference type="ChEBI" id="CHEBI:173083"/>
    </ligand>
</feature>
<feature type="binding site" evidence="2">
    <location>
        <position position="52"/>
    </location>
    <ligand>
        <name>aceneuramate</name>
        <dbReference type="ChEBI" id="CHEBI:173083"/>
    </ligand>
</feature>
<feature type="binding site" evidence="2">
    <location>
        <position position="175"/>
    </location>
    <ligand>
        <name>aceneuramate</name>
        <dbReference type="ChEBI" id="CHEBI:173083"/>
    </ligand>
</feature>
<feature type="binding site" evidence="2">
    <location>
        <position position="199"/>
    </location>
    <ligand>
        <name>aceneuramate</name>
        <dbReference type="ChEBI" id="CHEBI:173083"/>
    </ligand>
</feature>
<feature type="binding site" evidence="2">
    <location>
        <position position="201"/>
    </location>
    <ligand>
        <name>aceneuramate</name>
        <dbReference type="ChEBI" id="CHEBI:173083"/>
    </ligand>
</feature>
<feature type="binding site" evidence="2">
    <location>
        <position position="202"/>
    </location>
    <ligand>
        <name>aceneuramate</name>
        <dbReference type="ChEBI" id="CHEBI:173083"/>
    </ligand>
</feature>
<feature type="binding site" evidence="2">
    <location>
        <position position="218"/>
    </location>
    <ligand>
        <name>aceneuramate</name>
        <dbReference type="ChEBI" id="CHEBI:173083"/>
    </ligand>
</feature>
<feature type="modified residue" description="Phosphoserine" evidence="7">
    <location>
        <position position="308"/>
    </location>
</feature>